<gene>
    <name evidence="2" type="primary">rpsL</name>
    <name type="ordered locus">MCA2377</name>
</gene>
<keyword id="KW-0488">Methylation</keyword>
<keyword id="KW-1185">Reference proteome</keyword>
<keyword id="KW-0687">Ribonucleoprotein</keyword>
<keyword id="KW-0689">Ribosomal protein</keyword>
<keyword id="KW-0694">RNA-binding</keyword>
<keyword id="KW-0699">rRNA-binding</keyword>
<keyword id="KW-0820">tRNA-binding</keyword>
<comment type="function">
    <text evidence="2">With S4 and S5 plays an important role in translational accuracy.</text>
</comment>
<comment type="function">
    <text evidence="2">Interacts with and stabilizes bases of the 16S rRNA that are involved in tRNA selection in the A site and with the mRNA backbone. Located at the interface of the 30S and 50S subunits, it traverses the body of the 30S subunit contacting proteins on the other side and probably holding the rRNA structure together. The combined cluster of proteins S8, S12 and S17 appears to hold together the shoulder and platform of the 30S subunit.</text>
</comment>
<comment type="subunit">
    <text evidence="2">Part of the 30S ribosomal subunit. Contacts proteins S8 and S17. May interact with IF1 in the 30S initiation complex.</text>
</comment>
<comment type="similarity">
    <text evidence="2">Belongs to the universal ribosomal protein uS12 family.</text>
</comment>
<organism>
    <name type="scientific">Methylococcus capsulatus (strain ATCC 33009 / NCIMB 11132 / Bath)</name>
    <dbReference type="NCBI Taxonomy" id="243233"/>
    <lineage>
        <taxon>Bacteria</taxon>
        <taxon>Pseudomonadati</taxon>
        <taxon>Pseudomonadota</taxon>
        <taxon>Gammaproteobacteria</taxon>
        <taxon>Methylococcales</taxon>
        <taxon>Methylococcaceae</taxon>
        <taxon>Methylococcus</taxon>
    </lineage>
</organism>
<evidence type="ECO:0000250" key="1"/>
<evidence type="ECO:0000255" key="2">
    <source>
        <dbReference type="HAMAP-Rule" id="MF_00403"/>
    </source>
</evidence>
<evidence type="ECO:0000256" key="3">
    <source>
        <dbReference type="SAM" id="MobiDB-lite"/>
    </source>
</evidence>
<evidence type="ECO:0000305" key="4"/>
<dbReference type="EMBL" id="AE017282">
    <property type="protein sequence ID" value="AAU91578.1"/>
    <property type="molecule type" value="Genomic_DNA"/>
</dbReference>
<dbReference type="RefSeq" id="WP_010961604.1">
    <property type="nucleotide sequence ID" value="NC_002977.6"/>
</dbReference>
<dbReference type="SMR" id="Q605A7"/>
<dbReference type="STRING" id="243233.MCA2377"/>
<dbReference type="GeneID" id="88224579"/>
<dbReference type="KEGG" id="mca:MCA2377"/>
<dbReference type="eggNOG" id="COG0048">
    <property type="taxonomic scope" value="Bacteria"/>
</dbReference>
<dbReference type="HOGENOM" id="CLU_104295_1_2_6"/>
<dbReference type="Proteomes" id="UP000006821">
    <property type="component" value="Chromosome"/>
</dbReference>
<dbReference type="GO" id="GO:0015935">
    <property type="term" value="C:small ribosomal subunit"/>
    <property type="evidence" value="ECO:0007669"/>
    <property type="project" value="InterPro"/>
</dbReference>
<dbReference type="GO" id="GO:0019843">
    <property type="term" value="F:rRNA binding"/>
    <property type="evidence" value="ECO:0007669"/>
    <property type="project" value="UniProtKB-UniRule"/>
</dbReference>
<dbReference type="GO" id="GO:0003735">
    <property type="term" value="F:structural constituent of ribosome"/>
    <property type="evidence" value="ECO:0007669"/>
    <property type="project" value="InterPro"/>
</dbReference>
<dbReference type="GO" id="GO:0000049">
    <property type="term" value="F:tRNA binding"/>
    <property type="evidence" value="ECO:0007669"/>
    <property type="project" value="UniProtKB-UniRule"/>
</dbReference>
<dbReference type="GO" id="GO:0006412">
    <property type="term" value="P:translation"/>
    <property type="evidence" value="ECO:0007669"/>
    <property type="project" value="UniProtKB-UniRule"/>
</dbReference>
<dbReference type="CDD" id="cd03368">
    <property type="entry name" value="Ribosomal_S12"/>
    <property type="match status" value="1"/>
</dbReference>
<dbReference type="FunFam" id="2.40.50.140:FF:000001">
    <property type="entry name" value="30S ribosomal protein S12"/>
    <property type="match status" value="1"/>
</dbReference>
<dbReference type="Gene3D" id="2.40.50.140">
    <property type="entry name" value="Nucleic acid-binding proteins"/>
    <property type="match status" value="1"/>
</dbReference>
<dbReference type="HAMAP" id="MF_00403_B">
    <property type="entry name" value="Ribosomal_uS12_B"/>
    <property type="match status" value="1"/>
</dbReference>
<dbReference type="InterPro" id="IPR012340">
    <property type="entry name" value="NA-bd_OB-fold"/>
</dbReference>
<dbReference type="InterPro" id="IPR006032">
    <property type="entry name" value="Ribosomal_uS12"/>
</dbReference>
<dbReference type="InterPro" id="IPR005679">
    <property type="entry name" value="Ribosomal_uS12_bac"/>
</dbReference>
<dbReference type="NCBIfam" id="TIGR00981">
    <property type="entry name" value="rpsL_bact"/>
    <property type="match status" value="1"/>
</dbReference>
<dbReference type="PANTHER" id="PTHR11652">
    <property type="entry name" value="30S RIBOSOMAL PROTEIN S12 FAMILY MEMBER"/>
    <property type="match status" value="1"/>
</dbReference>
<dbReference type="Pfam" id="PF00164">
    <property type="entry name" value="Ribosom_S12_S23"/>
    <property type="match status" value="1"/>
</dbReference>
<dbReference type="PIRSF" id="PIRSF002133">
    <property type="entry name" value="Ribosomal_S12/S23"/>
    <property type="match status" value="1"/>
</dbReference>
<dbReference type="PRINTS" id="PR01034">
    <property type="entry name" value="RIBOSOMALS12"/>
</dbReference>
<dbReference type="SUPFAM" id="SSF50249">
    <property type="entry name" value="Nucleic acid-binding proteins"/>
    <property type="match status" value="1"/>
</dbReference>
<dbReference type="PROSITE" id="PS00055">
    <property type="entry name" value="RIBOSOMAL_S12"/>
    <property type="match status" value="1"/>
</dbReference>
<name>RS12_METCA</name>
<feature type="chain" id="PRO_0000146254" description="Small ribosomal subunit protein uS12">
    <location>
        <begin position="1"/>
        <end position="124"/>
    </location>
</feature>
<feature type="region of interest" description="Disordered" evidence="3">
    <location>
        <begin position="103"/>
        <end position="124"/>
    </location>
</feature>
<feature type="compositionally biased region" description="Basic residues" evidence="3">
    <location>
        <begin position="108"/>
        <end position="124"/>
    </location>
</feature>
<feature type="modified residue" description="3-methylthioaspartic acid" evidence="1">
    <location>
        <position position="89"/>
    </location>
</feature>
<accession>Q605A7</accession>
<proteinExistence type="inferred from homology"/>
<reference key="1">
    <citation type="journal article" date="2004" name="PLoS Biol.">
        <title>Genomic insights into methanotrophy: the complete genome sequence of Methylococcus capsulatus (Bath).</title>
        <authorList>
            <person name="Ward N.L."/>
            <person name="Larsen O."/>
            <person name="Sakwa J."/>
            <person name="Bruseth L."/>
            <person name="Khouri H.M."/>
            <person name="Durkin A.S."/>
            <person name="Dimitrov G."/>
            <person name="Jiang L."/>
            <person name="Scanlan D."/>
            <person name="Kang K.H."/>
            <person name="Lewis M.R."/>
            <person name="Nelson K.E."/>
            <person name="Methe B.A."/>
            <person name="Wu M."/>
            <person name="Heidelberg J.F."/>
            <person name="Paulsen I.T."/>
            <person name="Fouts D.E."/>
            <person name="Ravel J."/>
            <person name="Tettelin H."/>
            <person name="Ren Q."/>
            <person name="Read T.D."/>
            <person name="DeBoy R.T."/>
            <person name="Seshadri R."/>
            <person name="Salzberg S.L."/>
            <person name="Jensen H.B."/>
            <person name="Birkeland N.K."/>
            <person name="Nelson W.C."/>
            <person name="Dodson R.J."/>
            <person name="Grindhaug S.H."/>
            <person name="Holt I.E."/>
            <person name="Eidhammer I."/>
            <person name="Jonasen I."/>
            <person name="Vanaken S."/>
            <person name="Utterback T.R."/>
            <person name="Feldblyum T.V."/>
            <person name="Fraser C.M."/>
            <person name="Lillehaug J.R."/>
            <person name="Eisen J.A."/>
        </authorList>
    </citation>
    <scope>NUCLEOTIDE SEQUENCE [LARGE SCALE GENOMIC DNA]</scope>
    <source>
        <strain>ATCC 33009 / NCIMB 11132 / Bath</strain>
    </source>
</reference>
<protein>
    <recommendedName>
        <fullName evidence="2">Small ribosomal subunit protein uS12</fullName>
    </recommendedName>
    <alternativeName>
        <fullName evidence="4">30S ribosomal protein S12</fullName>
    </alternativeName>
</protein>
<sequence>MTTINQLVRKPRVSKKEKSNVPALEGCPQRRGVCTRVYTTTPKKPNSALRKVARVRLTNGAEVTSYIGGEGHNLQEHSVILIRGGRVKDLPGVRYHVVRGSLDTAGVQKRRQGRSKYGAKRPKS</sequence>